<reference key="1">
    <citation type="journal article" date="2003" name="Nucleic Acids Res.">
        <title>What's in the genome of a filamentous fungus? Analysis of the Neurospora genome sequence.</title>
        <authorList>
            <person name="Mannhaupt G."/>
            <person name="Montrone C."/>
            <person name="Haase D."/>
            <person name="Mewes H.-W."/>
            <person name="Aign V."/>
            <person name="Hoheisel J.D."/>
            <person name="Fartmann B."/>
            <person name="Nyakatura G."/>
            <person name="Kempken F."/>
            <person name="Maier J."/>
            <person name="Schulte U."/>
        </authorList>
    </citation>
    <scope>NUCLEOTIDE SEQUENCE [LARGE SCALE GENOMIC DNA]</scope>
    <source>
        <strain>ATCC 24698 / 74-OR23-1A / CBS 708.71 / DSM 1257 / FGSC 987</strain>
    </source>
</reference>
<reference key="2">
    <citation type="journal article" date="2003" name="Nature">
        <title>The genome sequence of the filamentous fungus Neurospora crassa.</title>
        <authorList>
            <person name="Galagan J.E."/>
            <person name="Calvo S.E."/>
            <person name="Borkovich K.A."/>
            <person name="Selker E.U."/>
            <person name="Read N.D."/>
            <person name="Jaffe D.B."/>
            <person name="FitzHugh W."/>
            <person name="Ma L.-J."/>
            <person name="Smirnov S."/>
            <person name="Purcell S."/>
            <person name="Rehman B."/>
            <person name="Elkins T."/>
            <person name="Engels R."/>
            <person name="Wang S."/>
            <person name="Nielsen C.B."/>
            <person name="Butler J."/>
            <person name="Endrizzi M."/>
            <person name="Qui D."/>
            <person name="Ianakiev P."/>
            <person name="Bell-Pedersen D."/>
            <person name="Nelson M.A."/>
            <person name="Werner-Washburne M."/>
            <person name="Selitrennikoff C.P."/>
            <person name="Kinsey J.A."/>
            <person name="Braun E.L."/>
            <person name="Zelter A."/>
            <person name="Schulte U."/>
            <person name="Kothe G.O."/>
            <person name="Jedd G."/>
            <person name="Mewes H.-W."/>
            <person name="Staben C."/>
            <person name="Marcotte E."/>
            <person name="Greenberg D."/>
            <person name="Roy A."/>
            <person name="Foley K."/>
            <person name="Naylor J."/>
            <person name="Stange-Thomann N."/>
            <person name="Barrett R."/>
            <person name="Gnerre S."/>
            <person name="Kamal M."/>
            <person name="Kamvysselis M."/>
            <person name="Mauceli E.W."/>
            <person name="Bielke C."/>
            <person name="Rudd S."/>
            <person name="Frishman D."/>
            <person name="Krystofova S."/>
            <person name="Rasmussen C."/>
            <person name="Metzenberg R.L."/>
            <person name="Perkins D.D."/>
            <person name="Kroken S."/>
            <person name="Cogoni C."/>
            <person name="Macino G."/>
            <person name="Catcheside D.E.A."/>
            <person name="Li W."/>
            <person name="Pratt R.J."/>
            <person name="Osmani S.A."/>
            <person name="DeSouza C.P.C."/>
            <person name="Glass N.L."/>
            <person name="Orbach M.J."/>
            <person name="Berglund J.A."/>
            <person name="Voelker R."/>
            <person name="Yarden O."/>
            <person name="Plamann M."/>
            <person name="Seiler S."/>
            <person name="Dunlap J.C."/>
            <person name="Radford A."/>
            <person name="Aramayo R."/>
            <person name="Natvig D.O."/>
            <person name="Alex L.A."/>
            <person name="Mannhaupt G."/>
            <person name="Ebbole D.J."/>
            <person name="Freitag M."/>
            <person name="Paulsen I."/>
            <person name="Sachs M.S."/>
            <person name="Lander E.S."/>
            <person name="Nusbaum C."/>
            <person name="Birren B.W."/>
        </authorList>
    </citation>
    <scope>NUCLEOTIDE SEQUENCE [LARGE SCALE GENOMIC DNA]</scope>
    <source>
        <strain>ATCC 24698 / 74-OR23-1A / CBS 708.71 / DSM 1257 / FGSC 987</strain>
    </source>
</reference>
<keyword id="KW-0963">Cytoplasm</keyword>
<keyword id="KW-0539">Nucleus</keyword>
<keyword id="KW-0653">Protein transport</keyword>
<keyword id="KW-1185">Reference proteome</keyword>
<keyword id="KW-0678">Repressor</keyword>
<keyword id="KW-0804">Transcription</keyword>
<keyword id="KW-0805">Transcription regulation</keyword>
<keyword id="KW-0813">Transport</keyword>
<sequence length="152" mass="16566">MSDVQERLKKLGASARIGIGKGTPRRKVKRAPARSAGDDKKLQATLKKVNVQPIQAIEEVNMFKSDGNVIHFAAPKVHAAVPANTFAIYGNGEDKELTELVPGILNQLGPDSLASLRKLAESYQNMQKNEKDAEEDDIPDLVAGENFESKVE</sequence>
<gene>
    <name type="primary">npc-2</name>
    <name type="synonym">egd1</name>
    <name type="ORF">5C2.050</name>
    <name type="ORF">NCU03148</name>
</gene>
<name>NACB_NEUCR</name>
<evidence type="ECO:0000250" key="1"/>
<evidence type="ECO:0000255" key="2">
    <source>
        <dbReference type="PROSITE-ProRule" id="PRU00507"/>
    </source>
</evidence>
<evidence type="ECO:0000256" key="3">
    <source>
        <dbReference type="SAM" id="MobiDB-lite"/>
    </source>
</evidence>
<evidence type="ECO:0000305" key="4"/>
<feature type="chain" id="PRO_0000273513" description="Nascent polypeptide-associated complex subunit beta">
    <location>
        <begin position="1"/>
        <end position="152"/>
    </location>
</feature>
<feature type="domain" description="NAC-A/B" evidence="2">
    <location>
        <begin position="36"/>
        <end position="101"/>
    </location>
</feature>
<feature type="region of interest" description="Disordered" evidence="3">
    <location>
        <begin position="19"/>
        <end position="39"/>
    </location>
</feature>
<feature type="region of interest" description="Disordered" evidence="3">
    <location>
        <begin position="125"/>
        <end position="152"/>
    </location>
</feature>
<feature type="compositionally biased region" description="Basic residues" evidence="3">
    <location>
        <begin position="23"/>
        <end position="32"/>
    </location>
</feature>
<accession>Q7SDU4</accession>
<protein>
    <recommendedName>
        <fullName>Nascent polypeptide-associated complex subunit beta</fullName>
        <shortName>NAC-beta</shortName>
    </recommendedName>
    <alternativeName>
        <fullName>Beta-NAC</fullName>
    </alternativeName>
    <alternativeName>
        <fullName>Nascent polypeptide complex protein 2</fullName>
    </alternativeName>
</protein>
<proteinExistence type="inferred from homology"/>
<comment type="function">
    <text evidence="1">Component of the nascent polypeptide-associated complex (NAC), a dynamic component of the ribosomal exit tunnel, protecting the emerging polypeptides from interaction with other cytoplasmic proteins to ensure appropriate nascent protein targeting. The NAC complex also promotes mitochondrial protein import by enhancing productive ribosome interactions with the outer mitochondrial membrane and blocks the inappropriate interaction of ribosomes translating non-secretory nascent polypeptides with translocation sites in the membrane of the endoplasmic reticulum. Npc-2/egd1 may act as a transcription factor that exert a negative effect on the expression of several genes that are transcribed by RNA polymerase II.</text>
</comment>
<comment type="subunit">
    <text evidence="1">Part of the nascent polypeptide-associated complex (NAC), consisting of npc-1/egd2 and npc-2/egd1. NAC associates with ribosomes via npc-2/egd1 (By similarity).</text>
</comment>
<comment type="subcellular location">
    <subcellularLocation>
        <location evidence="1">Cytoplasm</location>
    </subcellularLocation>
    <subcellularLocation>
        <location evidence="1">Nucleus</location>
    </subcellularLocation>
    <text evidence="1">Predominantly cytoplasmic, may also transiently localize to the nucleus.</text>
</comment>
<comment type="similarity">
    <text evidence="4">Belongs to the NAC-beta family.</text>
</comment>
<comment type="sequence caution" evidence="4">
    <conflict type="erroneous gene model prediction">
        <sequence resource="EMBL-CDS" id="CAE76548"/>
    </conflict>
</comment>
<dbReference type="EMBL" id="BX842637">
    <property type="protein sequence ID" value="CAE76548.1"/>
    <property type="status" value="ALT_SEQ"/>
    <property type="molecule type" value="Genomic_DNA"/>
</dbReference>
<dbReference type="EMBL" id="CM002236">
    <property type="protein sequence ID" value="EAA34961.2"/>
    <property type="molecule type" value="Genomic_DNA"/>
</dbReference>
<dbReference type="RefSeq" id="XP_964197.2">
    <property type="nucleotide sequence ID" value="XM_959104.3"/>
</dbReference>
<dbReference type="SMR" id="Q7SDU4"/>
<dbReference type="FunCoup" id="Q7SDU4">
    <property type="interactions" value="1193"/>
</dbReference>
<dbReference type="STRING" id="367110.Q7SDU4"/>
<dbReference type="PaxDb" id="5141-EFNCRP00000003001"/>
<dbReference type="EnsemblFungi" id="EAA34961">
    <property type="protein sequence ID" value="EAA34961"/>
    <property type="gene ID" value="NCU03148"/>
</dbReference>
<dbReference type="GeneID" id="3880346"/>
<dbReference type="KEGG" id="ncr:NCU03148"/>
<dbReference type="VEuPathDB" id="FungiDB:NCU03148"/>
<dbReference type="HOGENOM" id="CLU_098726_2_0_1"/>
<dbReference type="InParanoid" id="Q7SDU4"/>
<dbReference type="OMA" id="AGDTYME"/>
<dbReference type="OrthoDB" id="8033832at2759"/>
<dbReference type="Proteomes" id="UP000001805">
    <property type="component" value="Chromosome 1, Linkage Group I"/>
</dbReference>
<dbReference type="GO" id="GO:0005829">
    <property type="term" value="C:cytosol"/>
    <property type="evidence" value="ECO:0000318"/>
    <property type="project" value="GO_Central"/>
</dbReference>
<dbReference type="GO" id="GO:0005854">
    <property type="term" value="C:nascent polypeptide-associated complex"/>
    <property type="evidence" value="ECO:0000318"/>
    <property type="project" value="GO_Central"/>
</dbReference>
<dbReference type="GO" id="GO:0005634">
    <property type="term" value="C:nucleus"/>
    <property type="evidence" value="ECO:0007669"/>
    <property type="project" value="UniProtKB-SubCell"/>
</dbReference>
<dbReference type="GO" id="GO:0015031">
    <property type="term" value="P:protein transport"/>
    <property type="evidence" value="ECO:0007669"/>
    <property type="project" value="UniProtKB-KW"/>
</dbReference>
<dbReference type="CDD" id="cd22055">
    <property type="entry name" value="NAC_BTF3"/>
    <property type="match status" value="1"/>
</dbReference>
<dbReference type="FunFam" id="2.20.70.30:FF:000003">
    <property type="entry name" value="Nascent polypeptide-associated complex subunit beta"/>
    <property type="match status" value="1"/>
</dbReference>
<dbReference type="Gene3D" id="2.20.70.30">
    <property type="entry name" value="Nascent polypeptide-associated complex domain"/>
    <property type="match status" value="1"/>
</dbReference>
<dbReference type="InterPro" id="IPR039370">
    <property type="entry name" value="BTF3"/>
</dbReference>
<dbReference type="InterPro" id="IPR038187">
    <property type="entry name" value="NAC_A/B_dom_sf"/>
</dbReference>
<dbReference type="InterPro" id="IPR002715">
    <property type="entry name" value="Nas_poly-pep-assoc_cplx_dom"/>
</dbReference>
<dbReference type="PANTHER" id="PTHR10351">
    <property type="entry name" value="TRANSCRIPTION FACTOR BTF3 FAMILY MEMBER"/>
    <property type="match status" value="1"/>
</dbReference>
<dbReference type="Pfam" id="PF01849">
    <property type="entry name" value="NAC"/>
    <property type="match status" value="1"/>
</dbReference>
<dbReference type="SMART" id="SM01407">
    <property type="entry name" value="NAC"/>
    <property type="match status" value="1"/>
</dbReference>
<dbReference type="PROSITE" id="PS51151">
    <property type="entry name" value="NAC_AB"/>
    <property type="match status" value="1"/>
</dbReference>
<organism>
    <name type="scientific">Neurospora crassa (strain ATCC 24698 / 74-OR23-1A / CBS 708.71 / DSM 1257 / FGSC 987)</name>
    <dbReference type="NCBI Taxonomy" id="367110"/>
    <lineage>
        <taxon>Eukaryota</taxon>
        <taxon>Fungi</taxon>
        <taxon>Dikarya</taxon>
        <taxon>Ascomycota</taxon>
        <taxon>Pezizomycotina</taxon>
        <taxon>Sordariomycetes</taxon>
        <taxon>Sordariomycetidae</taxon>
        <taxon>Sordariales</taxon>
        <taxon>Sordariaceae</taxon>
        <taxon>Neurospora</taxon>
    </lineage>
</organism>